<dbReference type="EC" id="2.1.2.11" evidence="1"/>
<dbReference type="EMBL" id="CP001164">
    <property type="protein sequence ID" value="ACI38236.1"/>
    <property type="molecule type" value="Genomic_DNA"/>
</dbReference>
<dbReference type="RefSeq" id="WP_000805473.1">
    <property type="nucleotide sequence ID" value="NC_011353.1"/>
</dbReference>
<dbReference type="SMR" id="B5YZH1"/>
<dbReference type="KEGG" id="ecf:ECH74115_0143"/>
<dbReference type="HOGENOM" id="CLU_036645_1_0_6"/>
<dbReference type="UniPathway" id="UPA00028">
    <property type="reaction ID" value="UER00003"/>
</dbReference>
<dbReference type="GO" id="GO:0005737">
    <property type="term" value="C:cytoplasm"/>
    <property type="evidence" value="ECO:0007669"/>
    <property type="project" value="UniProtKB-SubCell"/>
</dbReference>
<dbReference type="GO" id="GO:0003864">
    <property type="term" value="F:3-methyl-2-oxobutanoate hydroxymethyltransferase activity"/>
    <property type="evidence" value="ECO:0007669"/>
    <property type="project" value="UniProtKB-UniRule"/>
</dbReference>
<dbReference type="GO" id="GO:0000287">
    <property type="term" value="F:magnesium ion binding"/>
    <property type="evidence" value="ECO:0007669"/>
    <property type="project" value="TreeGrafter"/>
</dbReference>
<dbReference type="GO" id="GO:0015940">
    <property type="term" value="P:pantothenate biosynthetic process"/>
    <property type="evidence" value="ECO:0007669"/>
    <property type="project" value="UniProtKB-UniRule"/>
</dbReference>
<dbReference type="CDD" id="cd06557">
    <property type="entry name" value="KPHMT-like"/>
    <property type="match status" value="1"/>
</dbReference>
<dbReference type="FunFam" id="3.20.20.60:FF:000003">
    <property type="entry name" value="3-methyl-2-oxobutanoate hydroxymethyltransferase"/>
    <property type="match status" value="1"/>
</dbReference>
<dbReference type="Gene3D" id="3.20.20.60">
    <property type="entry name" value="Phosphoenolpyruvate-binding domains"/>
    <property type="match status" value="1"/>
</dbReference>
<dbReference type="HAMAP" id="MF_00156">
    <property type="entry name" value="PanB"/>
    <property type="match status" value="1"/>
</dbReference>
<dbReference type="InterPro" id="IPR003700">
    <property type="entry name" value="Pantoate_hydroxy_MeTrfase"/>
</dbReference>
<dbReference type="InterPro" id="IPR015813">
    <property type="entry name" value="Pyrv/PenolPyrv_kinase-like_dom"/>
</dbReference>
<dbReference type="InterPro" id="IPR040442">
    <property type="entry name" value="Pyrv_kinase-like_dom_sf"/>
</dbReference>
<dbReference type="NCBIfam" id="TIGR00222">
    <property type="entry name" value="panB"/>
    <property type="match status" value="1"/>
</dbReference>
<dbReference type="NCBIfam" id="NF001452">
    <property type="entry name" value="PRK00311.1"/>
    <property type="match status" value="1"/>
</dbReference>
<dbReference type="PANTHER" id="PTHR20881">
    <property type="entry name" value="3-METHYL-2-OXOBUTANOATE HYDROXYMETHYLTRANSFERASE"/>
    <property type="match status" value="1"/>
</dbReference>
<dbReference type="PANTHER" id="PTHR20881:SF0">
    <property type="entry name" value="3-METHYL-2-OXOBUTANOATE HYDROXYMETHYLTRANSFERASE"/>
    <property type="match status" value="1"/>
</dbReference>
<dbReference type="Pfam" id="PF02548">
    <property type="entry name" value="Pantoate_transf"/>
    <property type="match status" value="1"/>
</dbReference>
<dbReference type="PIRSF" id="PIRSF000388">
    <property type="entry name" value="Pantoate_hydroxy_MeTrfase"/>
    <property type="match status" value="1"/>
</dbReference>
<dbReference type="SUPFAM" id="SSF51621">
    <property type="entry name" value="Phosphoenolpyruvate/pyruvate domain"/>
    <property type="match status" value="1"/>
</dbReference>
<reference key="1">
    <citation type="journal article" date="2011" name="Proc. Natl. Acad. Sci. U.S.A.">
        <title>Genomic anatomy of Escherichia coli O157:H7 outbreaks.</title>
        <authorList>
            <person name="Eppinger M."/>
            <person name="Mammel M.K."/>
            <person name="Leclerc J.E."/>
            <person name="Ravel J."/>
            <person name="Cebula T.A."/>
        </authorList>
    </citation>
    <scope>NUCLEOTIDE SEQUENCE [LARGE SCALE GENOMIC DNA]</scope>
    <source>
        <strain>EC4115 / EHEC</strain>
    </source>
</reference>
<comment type="function">
    <text evidence="1">Catalyzes the reversible reaction in which hydroxymethyl group from 5,10-methylenetetrahydrofolate is transferred onto alpha-ketoisovalerate to form ketopantoate.</text>
</comment>
<comment type="catalytic activity">
    <reaction evidence="1">
        <text>3-methyl-2-oxobutanoate + (6R)-5,10-methylene-5,6,7,8-tetrahydrofolate + H2O = 2-dehydropantoate + (6S)-5,6,7,8-tetrahydrofolate</text>
        <dbReference type="Rhea" id="RHEA:11824"/>
        <dbReference type="ChEBI" id="CHEBI:11561"/>
        <dbReference type="ChEBI" id="CHEBI:11851"/>
        <dbReference type="ChEBI" id="CHEBI:15377"/>
        <dbReference type="ChEBI" id="CHEBI:15636"/>
        <dbReference type="ChEBI" id="CHEBI:57453"/>
        <dbReference type="EC" id="2.1.2.11"/>
    </reaction>
</comment>
<comment type="cofactor">
    <cofactor evidence="1">
        <name>Mg(2+)</name>
        <dbReference type="ChEBI" id="CHEBI:18420"/>
    </cofactor>
    <text evidence="1">Binds 1 Mg(2+) ion per subunit.</text>
</comment>
<comment type="pathway">
    <text evidence="1">Cofactor biosynthesis; (R)-pantothenate biosynthesis; (R)-pantoate from 3-methyl-2-oxobutanoate: step 1/2.</text>
</comment>
<comment type="subunit">
    <text evidence="1">Homodecamer; pentamer of dimers.</text>
</comment>
<comment type="subcellular location">
    <subcellularLocation>
        <location evidence="1">Cytoplasm</location>
    </subcellularLocation>
</comment>
<comment type="similarity">
    <text evidence="1">Belongs to the PanB family.</text>
</comment>
<evidence type="ECO:0000255" key="1">
    <source>
        <dbReference type="HAMAP-Rule" id="MF_00156"/>
    </source>
</evidence>
<protein>
    <recommendedName>
        <fullName evidence="1">3-methyl-2-oxobutanoate hydroxymethyltransferase</fullName>
        <ecNumber evidence="1">2.1.2.11</ecNumber>
    </recommendedName>
    <alternativeName>
        <fullName evidence="1">Ketopantoate hydroxymethyltransferase</fullName>
        <shortName evidence="1">KPHMT</shortName>
    </alternativeName>
</protein>
<gene>
    <name evidence="1" type="primary">panB</name>
    <name type="ordered locus">ECH74115_0143</name>
</gene>
<organism>
    <name type="scientific">Escherichia coli O157:H7 (strain EC4115 / EHEC)</name>
    <dbReference type="NCBI Taxonomy" id="444450"/>
    <lineage>
        <taxon>Bacteria</taxon>
        <taxon>Pseudomonadati</taxon>
        <taxon>Pseudomonadota</taxon>
        <taxon>Gammaproteobacteria</taxon>
        <taxon>Enterobacterales</taxon>
        <taxon>Enterobacteriaceae</taxon>
        <taxon>Escherichia</taxon>
    </lineage>
</organism>
<feature type="chain" id="PRO_1000096961" description="3-methyl-2-oxobutanoate hydroxymethyltransferase">
    <location>
        <begin position="1"/>
        <end position="264"/>
    </location>
</feature>
<feature type="active site" description="Proton acceptor" evidence="1">
    <location>
        <position position="181"/>
    </location>
</feature>
<feature type="binding site" evidence="1">
    <location>
        <begin position="45"/>
        <end position="46"/>
    </location>
    <ligand>
        <name>3-methyl-2-oxobutanoate</name>
        <dbReference type="ChEBI" id="CHEBI:11851"/>
    </ligand>
</feature>
<feature type="binding site" evidence="1">
    <location>
        <position position="45"/>
    </location>
    <ligand>
        <name>Mg(2+)</name>
        <dbReference type="ChEBI" id="CHEBI:18420"/>
    </ligand>
</feature>
<feature type="binding site" evidence="1">
    <location>
        <position position="84"/>
    </location>
    <ligand>
        <name>3-methyl-2-oxobutanoate</name>
        <dbReference type="ChEBI" id="CHEBI:11851"/>
    </ligand>
</feature>
<feature type="binding site" evidence="1">
    <location>
        <position position="84"/>
    </location>
    <ligand>
        <name>Mg(2+)</name>
        <dbReference type="ChEBI" id="CHEBI:18420"/>
    </ligand>
</feature>
<feature type="binding site" evidence="1">
    <location>
        <position position="112"/>
    </location>
    <ligand>
        <name>3-methyl-2-oxobutanoate</name>
        <dbReference type="ChEBI" id="CHEBI:11851"/>
    </ligand>
</feature>
<feature type="binding site" evidence="1">
    <location>
        <position position="114"/>
    </location>
    <ligand>
        <name>Mg(2+)</name>
        <dbReference type="ChEBI" id="CHEBI:18420"/>
    </ligand>
</feature>
<accession>B5YZH1</accession>
<proteinExistence type="inferred from homology"/>
<name>PANB_ECO5E</name>
<keyword id="KW-0963">Cytoplasm</keyword>
<keyword id="KW-0460">Magnesium</keyword>
<keyword id="KW-0479">Metal-binding</keyword>
<keyword id="KW-0566">Pantothenate biosynthesis</keyword>
<keyword id="KW-0808">Transferase</keyword>
<sequence length="264" mass="28310">MKPTTIASLQKCKQEKKRFATITAYDYSFAKLFAEEGLNVMLVGDSLGMTVQGHESTLPVTVEDIAYHTTAVRRGAPNCLLLADLPFMAYATPEQAFENAATVMRAGANMVKIEGGEWLVETVKMLTERAVPVCGHLGLTPQSVNIFGGYKVQGRGDEASDRLLSDALALEAAGAQLLVLECVPVELAKRITEALAIPVIGIGAGNVTDGQILVMHDAFGITGGHIPKFAKNFLAETGDIRAAVRQYMAEVESGVYPGEEHSFH</sequence>